<gene>
    <name type="primary">argS</name>
    <name type="ordered locus">TM_1093</name>
</gene>
<proteinExistence type="inferred from homology"/>
<dbReference type="EC" id="6.1.1.19"/>
<dbReference type="EMBL" id="AE000512">
    <property type="protein sequence ID" value="AAD36169.1"/>
    <property type="molecule type" value="Genomic_DNA"/>
</dbReference>
<dbReference type="PIR" id="D72298">
    <property type="entry name" value="D72298"/>
</dbReference>
<dbReference type="RefSeq" id="NP_228899.1">
    <property type="nucleotide sequence ID" value="NC_000853.1"/>
</dbReference>
<dbReference type="RefSeq" id="WP_004080362.1">
    <property type="nucleotide sequence ID" value="NC_000853.1"/>
</dbReference>
<dbReference type="SMR" id="Q9X0H8"/>
<dbReference type="FunCoup" id="Q9X0H8">
    <property type="interactions" value="348"/>
</dbReference>
<dbReference type="STRING" id="243274.TM_1093"/>
<dbReference type="PaxDb" id="243274-THEMA_08885"/>
<dbReference type="EnsemblBacteria" id="AAD36169">
    <property type="protein sequence ID" value="AAD36169"/>
    <property type="gene ID" value="TM_1093"/>
</dbReference>
<dbReference type="KEGG" id="tma:TM1093"/>
<dbReference type="KEGG" id="tmi:THEMA_08885"/>
<dbReference type="KEGG" id="tmm:Tmari_1098"/>
<dbReference type="KEGG" id="tmw:THMA_1116"/>
<dbReference type="eggNOG" id="COG0018">
    <property type="taxonomic scope" value="Bacteria"/>
</dbReference>
<dbReference type="InParanoid" id="Q9X0H8"/>
<dbReference type="OrthoDB" id="9805987at2"/>
<dbReference type="Proteomes" id="UP000008183">
    <property type="component" value="Chromosome"/>
</dbReference>
<dbReference type="GO" id="GO:0005737">
    <property type="term" value="C:cytoplasm"/>
    <property type="evidence" value="ECO:0007669"/>
    <property type="project" value="UniProtKB-SubCell"/>
</dbReference>
<dbReference type="GO" id="GO:0004814">
    <property type="term" value="F:arginine-tRNA ligase activity"/>
    <property type="evidence" value="ECO:0000318"/>
    <property type="project" value="GO_Central"/>
</dbReference>
<dbReference type="GO" id="GO:0005524">
    <property type="term" value="F:ATP binding"/>
    <property type="evidence" value="ECO:0007669"/>
    <property type="project" value="UniProtKB-UniRule"/>
</dbReference>
<dbReference type="GO" id="GO:0006420">
    <property type="term" value="P:arginyl-tRNA aminoacylation"/>
    <property type="evidence" value="ECO:0000318"/>
    <property type="project" value="GO_Central"/>
</dbReference>
<dbReference type="CDD" id="cd00671">
    <property type="entry name" value="ArgRS_core"/>
    <property type="match status" value="1"/>
</dbReference>
<dbReference type="FunFam" id="1.10.730.10:FF:000008">
    <property type="entry name" value="Arginine--tRNA ligase"/>
    <property type="match status" value="1"/>
</dbReference>
<dbReference type="FunFam" id="3.30.1360.70:FF:000003">
    <property type="entry name" value="Arginine--tRNA ligase"/>
    <property type="match status" value="1"/>
</dbReference>
<dbReference type="FunFam" id="3.40.50.620:FF:000062">
    <property type="entry name" value="Arginine--tRNA ligase"/>
    <property type="match status" value="1"/>
</dbReference>
<dbReference type="Gene3D" id="3.30.1360.70">
    <property type="entry name" value="Arginyl tRNA synthetase N-terminal domain"/>
    <property type="match status" value="1"/>
</dbReference>
<dbReference type="Gene3D" id="3.40.50.620">
    <property type="entry name" value="HUPs"/>
    <property type="match status" value="1"/>
</dbReference>
<dbReference type="Gene3D" id="1.10.730.10">
    <property type="entry name" value="Isoleucyl-tRNA Synthetase, Domain 1"/>
    <property type="match status" value="1"/>
</dbReference>
<dbReference type="HAMAP" id="MF_00123">
    <property type="entry name" value="Arg_tRNA_synth"/>
    <property type="match status" value="1"/>
</dbReference>
<dbReference type="InterPro" id="IPR001412">
    <property type="entry name" value="aa-tRNA-synth_I_CS"/>
</dbReference>
<dbReference type="InterPro" id="IPR001278">
    <property type="entry name" value="Arg-tRNA-ligase"/>
</dbReference>
<dbReference type="InterPro" id="IPR005148">
    <property type="entry name" value="Arg-tRNA-synth_N"/>
</dbReference>
<dbReference type="InterPro" id="IPR036695">
    <property type="entry name" value="Arg-tRNA-synth_N_sf"/>
</dbReference>
<dbReference type="InterPro" id="IPR035684">
    <property type="entry name" value="ArgRS_core"/>
</dbReference>
<dbReference type="InterPro" id="IPR008909">
    <property type="entry name" value="DALR_anticod-bd"/>
</dbReference>
<dbReference type="InterPro" id="IPR014729">
    <property type="entry name" value="Rossmann-like_a/b/a_fold"/>
</dbReference>
<dbReference type="InterPro" id="IPR009080">
    <property type="entry name" value="tRNAsynth_Ia_anticodon-bd"/>
</dbReference>
<dbReference type="NCBIfam" id="TIGR00456">
    <property type="entry name" value="argS"/>
    <property type="match status" value="1"/>
</dbReference>
<dbReference type="PANTHER" id="PTHR11956:SF5">
    <property type="entry name" value="ARGININE--TRNA LIGASE, CYTOPLASMIC"/>
    <property type="match status" value="1"/>
</dbReference>
<dbReference type="PANTHER" id="PTHR11956">
    <property type="entry name" value="ARGINYL-TRNA SYNTHETASE"/>
    <property type="match status" value="1"/>
</dbReference>
<dbReference type="Pfam" id="PF03485">
    <property type="entry name" value="Arg_tRNA_synt_N"/>
    <property type="match status" value="1"/>
</dbReference>
<dbReference type="Pfam" id="PF05746">
    <property type="entry name" value="DALR_1"/>
    <property type="match status" value="1"/>
</dbReference>
<dbReference type="Pfam" id="PF00750">
    <property type="entry name" value="tRNA-synt_1d"/>
    <property type="match status" value="1"/>
</dbReference>
<dbReference type="PRINTS" id="PR01038">
    <property type="entry name" value="TRNASYNTHARG"/>
</dbReference>
<dbReference type="SMART" id="SM01016">
    <property type="entry name" value="Arg_tRNA_synt_N"/>
    <property type="match status" value="1"/>
</dbReference>
<dbReference type="SMART" id="SM00836">
    <property type="entry name" value="DALR_1"/>
    <property type="match status" value="1"/>
</dbReference>
<dbReference type="SUPFAM" id="SSF47323">
    <property type="entry name" value="Anticodon-binding domain of a subclass of class I aminoacyl-tRNA synthetases"/>
    <property type="match status" value="1"/>
</dbReference>
<dbReference type="SUPFAM" id="SSF55190">
    <property type="entry name" value="Arginyl-tRNA synthetase (ArgRS), N-terminal 'additional' domain"/>
    <property type="match status" value="1"/>
</dbReference>
<dbReference type="SUPFAM" id="SSF52374">
    <property type="entry name" value="Nucleotidylyl transferase"/>
    <property type="match status" value="1"/>
</dbReference>
<dbReference type="PROSITE" id="PS00178">
    <property type="entry name" value="AA_TRNA_LIGASE_I"/>
    <property type="match status" value="1"/>
</dbReference>
<feature type="chain" id="PRO_0000151628" description="Arginine--tRNA ligase">
    <location>
        <begin position="1"/>
        <end position="546"/>
    </location>
</feature>
<feature type="short sequence motif" description="'HIGH' region">
    <location>
        <begin position="122"/>
        <end position="132"/>
    </location>
</feature>
<protein>
    <recommendedName>
        <fullName>Arginine--tRNA ligase</fullName>
        <ecNumber>6.1.1.19</ecNumber>
    </recommendedName>
    <alternativeName>
        <fullName>Arginyl-tRNA synthetase</fullName>
        <shortName>ArgRS</shortName>
    </alternativeName>
</protein>
<organism>
    <name type="scientific">Thermotoga maritima (strain ATCC 43589 / DSM 3109 / JCM 10099 / NBRC 100826 / MSB8)</name>
    <dbReference type="NCBI Taxonomy" id="243274"/>
    <lineage>
        <taxon>Bacteria</taxon>
        <taxon>Thermotogati</taxon>
        <taxon>Thermotogota</taxon>
        <taxon>Thermotogae</taxon>
        <taxon>Thermotogales</taxon>
        <taxon>Thermotogaceae</taxon>
        <taxon>Thermotoga</taxon>
    </lineage>
</organism>
<evidence type="ECO:0000250" key="1"/>
<evidence type="ECO:0000305" key="2"/>
<accession>Q9X0H8</accession>
<sequence>MLVNAIRQKVSEVISKAYGSEIEFEVEIPPRKEFGDLSTNVAMKLAKTLKKNPREIAQEIVKSLDEDPSFDRIEIMGPGFINFFLSNELLRGVVKTVLEKKDEYGRENVGNGMKVQFEYGSANPTGPFTVGHGRQIIIGDVLSEVYKELGYDVTREMYINDAGKQIRLLAQSLWARYNQLLGVEKEIPEGGYRGEYLVDIARDLVNEIGDRYKDLWNEEVEEFFKQTALNRILSSMKDTLEKIGSSFDVYFSEKSLIEDGTVEEVLKLLKNKDVVYEKDGAVWLKVSAFIDEEDKVLVRSDGTYTYFMTDIAYHYKKYKRGFRKVYDIWGSDHHGHIPRMKAAMKALDIPDDFFNVILHQFVTLKRGGEIVRMSTRAGEFVTLDELLDEVGRDATRYFFAMVDPNTHMVFDIDLAKAKSMDNPVYYVQYAHARIHNLFSNAEKKGVKFEEGKHLELLGNEEERVLMRNLGMFNTALKEVAQMFAPNRLTNYLQSLAESFHAFYTKHVIVDPENPELSNARLNLALATGIVLRKGLKLIGVSAPERM</sequence>
<reference key="1">
    <citation type="journal article" date="1999" name="Nature">
        <title>Evidence for lateral gene transfer between Archaea and Bacteria from genome sequence of Thermotoga maritima.</title>
        <authorList>
            <person name="Nelson K.E."/>
            <person name="Clayton R.A."/>
            <person name="Gill S.R."/>
            <person name="Gwinn M.L."/>
            <person name="Dodson R.J."/>
            <person name="Haft D.H."/>
            <person name="Hickey E.K."/>
            <person name="Peterson J.D."/>
            <person name="Nelson W.C."/>
            <person name="Ketchum K.A."/>
            <person name="McDonald L.A."/>
            <person name="Utterback T.R."/>
            <person name="Malek J.A."/>
            <person name="Linher K.D."/>
            <person name="Garrett M.M."/>
            <person name="Stewart A.M."/>
            <person name="Cotton M.D."/>
            <person name="Pratt M.S."/>
            <person name="Phillips C.A."/>
            <person name="Richardson D.L."/>
            <person name="Heidelberg J.F."/>
            <person name="Sutton G.G."/>
            <person name="Fleischmann R.D."/>
            <person name="Eisen J.A."/>
            <person name="White O."/>
            <person name="Salzberg S.L."/>
            <person name="Smith H.O."/>
            <person name="Venter J.C."/>
            <person name="Fraser C.M."/>
        </authorList>
    </citation>
    <scope>NUCLEOTIDE SEQUENCE [LARGE SCALE GENOMIC DNA]</scope>
    <source>
        <strain>ATCC 43589 / DSM 3109 / JCM 10099 / NBRC 100826 / MSB8</strain>
    </source>
</reference>
<comment type="catalytic activity">
    <reaction>
        <text>tRNA(Arg) + L-arginine + ATP = L-arginyl-tRNA(Arg) + AMP + diphosphate</text>
        <dbReference type="Rhea" id="RHEA:20301"/>
        <dbReference type="Rhea" id="RHEA-COMP:9658"/>
        <dbReference type="Rhea" id="RHEA-COMP:9673"/>
        <dbReference type="ChEBI" id="CHEBI:30616"/>
        <dbReference type="ChEBI" id="CHEBI:32682"/>
        <dbReference type="ChEBI" id="CHEBI:33019"/>
        <dbReference type="ChEBI" id="CHEBI:78442"/>
        <dbReference type="ChEBI" id="CHEBI:78513"/>
        <dbReference type="ChEBI" id="CHEBI:456215"/>
        <dbReference type="EC" id="6.1.1.19"/>
    </reaction>
</comment>
<comment type="subunit">
    <text evidence="1">Monomer.</text>
</comment>
<comment type="subcellular location">
    <subcellularLocation>
        <location evidence="1">Cytoplasm</location>
    </subcellularLocation>
</comment>
<comment type="similarity">
    <text evidence="2">Belongs to the class-I aminoacyl-tRNA synthetase family.</text>
</comment>
<keyword id="KW-0030">Aminoacyl-tRNA synthetase</keyword>
<keyword id="KW-0067">ATP-binding</keyword>
<keyword id="KW-0963">Cytoplasm</keyword>
<keyword id="KW-0436">Ligase</keyword>
<keyword id="KW-0547">Nucleotide-binding</keyword>
<keyword id="KW-0648">Protein biosynthesis</keyword>
<keyword id="KW-1185">Reference proteome</keyword>
<name>SYR_THEMA</name>